<dbReference type="EMBL" id="AF248498">
    <property type="protein sequence ID" value="AAF68452.1"/>
    <property type="molecule type" value="Genomic_DNA"/>
</dbReference>
<dbReference type="GO" id="GO:1990904">
    <property type="term" value="C:ribonucleoprotein complex"/>
    <property type="evidence" value="ECO:0007669"/>
    <property type="project" value="UniProtKB-KW"/>
</dbReference>
<dbReference type="GO" id="GO:0005840">
    <property type="term" value="C:ribosome"/>
    <property type="evidence" value="ECO:0007669"/>
    <property type="project" value="UniProtKB-KW"/>
</dbReference>
<dbReference type="GO" id="GO:0070180">
    <property type="term" value="F:large ribosomal subunit rRNA binding"/>
    <property type="evidence" value="ECO:0007669"/>
    <property type="project" value="UniProtKB-UniRule"/>
</dbReference>
<dbReference type="GO" id="GO:0006412">
    <property type="term" value="P:translation"/>
    <property type="evidence" value="ECO:0007669"/>
    <property type="project" value="UniProtKB-UniRule"/>
</dbReference>
<dbReference type="CDD" id="cd05797">
    <property type="entry name" value="Ribosomal_L10"/>
    <property type="match status" value="1"/>
</dbReference>
<dbReference type="Gene3D" id="3.30.70.1730">
    <property type="match status" value="1"/>
</dbReference>
<dbReference type="HAMAP" id="MF_00362">
    <property type="entry name" value="Ribosomal_uL10"/>
    <property type="match status" value="1"/>
</dbReference>
<dbReference type="InterPro" id="IPR001790">
    <property type="entry name" value="Ribosomal_uL10"/>
</dbReference>
<dbReference type="InterPro" id="IPR043141">
    <property type="entry name" value="Ribosomal_uL10-like_sf"/>
</dbReference>
<dbReference type="InterPro" id="IPR022973">
    <property type="entry name" value="Ribosomal_uL10_bac"/>
</dbReference>
<dbReference type="InterPro" id="IPR047865">
    <property type="entry name" value="Ribosomal_uL10_bac_type"/>
</dbReference>
<dbReference type="NCBIfam" id="NF000955">
    <property type="entry name" value="PRK00099.1-1"/>
    <property type="match status" value="1"/>
</dbReference>
<dbReference type="PANTHER" id="PTHR11560">
    <property type="entry name" value="39S RIBOSOMAL PROTEIN L10, MITOCHONDRIAL"/>
    <property type="match status" value="1"/>
</dbReference>
<dbReference type="Pfam" id="PF00466">
    <property type="entry name" value="Ribosomal_L10"/>
    <property type="match status" value="1"/>
</dbReference>
<dbReference type="SUPFAM" id="SSF160369">
    <property type="entry name" value="Ribosomal protein L10-like"/>
    <property type="match status" value="1"/>
</dbReference>
<sequence length="172" mass="18508">MNRQEKSVEISELSKILSSSGSVVVAHYKGISVAQIRTSKEGXREAGGGVKVXXNRLVKIAVRDTSVKEVSDLFVGQSLIVYSVDPIVAPKISVNFANDNKQFVVLGGVLENDVLDQCSIKQIASLPNIDGIRAIIISAIQFNATKLLRLLSAPQAQVVRALSAFVDKNKQS</sequence>
<comment type="function">
    <text evidence="1">Forms part of the ribosomal stalk, playing a central role in the interaction of the ribosome with GTP-bound translation factors.</text>
</comment>
<comment type="subunit">
    <text evidence="1">Part of the ribosomal stalk of the 50S ribosomal subunit. The N-terminus interacts with L11 and the large rRNA to form the base of the stalk. The C-terminus forms an elongated spine to which L12 dimers bind in a sequential fashion forming a multimeric L10(L12)X complex (By similarity).</text>
</comment>
<comment type="similarity">
    <text evidence="2">Belongs to the universal ribosomal protein uL10 family.</text>
</comment>
<gene>
    <name type="primary">rplJ</name>
</gene>
<evidence type="ECO:0000250" key="1"/>
<evidence type="ECO:0000305" key="2"/>
<keyword id="KW-0687">Ribonucleoprotein</keyword>
<keyword id="KW-0689">Ribosomal protein</keyword>
<keyword id="KW-0694">RNA-binding</keyword>
<keyword id="KW-0699">rRNA-binding</keyword>
<feature type="chain" id="PRO_0000154654" description="Large ribosomal subunit protein uL10">
    <location>
        <begin position="1"/>
        <end position="172"/>
    </location>
</feature>
<name>RL10_LIBAC</name>
<protein>
    <recommendedName>
        <fullName evidence="2">Large ribosomal subunit protein uL10</fullName>
    </recommendedName>
    <alternativeName>
        <fullName>50S ribosomal protein L10</fullName>
    </alternativeName>
</protein>
<proteinExistence type="inferred from homology"/>
<organism>
    <name type="scientific">Liberibacter africanus subsp. capensis</name>
    <dbReference type="NCBI Taxonomy" id="119494"/>
    <lineage>
        <taxon>Bacteria</taxon>
        <taxon>Pseudomonadati</taxon>
        <taxon>Pseudomonadota</taxon>
        <taxon>Alphaproteobacteria</taxon>
        <taxon>Hyphomicrobiales</taxon>
        <taxon>Rhizobiaceae</taxon>
        <taxon>Liberibacter</taxon>
    </lineage>
</organism>
<reference key="1">
    <citation type="journal article" date="2000" name="Int. J. Syst. Evol. Microbiol.">
        <title>Genomic characterization of a liberibacter present in an ornamental rutaceous tree, Calodendrum capense, in the Western Cape Province of South Africa. Proposal of 'Candidatus Liberibacter africanus subsp. capensis'.</title>
        <authorList>
            <person name="Garnier M."/>
            <person name="Jagoueix-Eveillard S."/>
            <person name="Cronje P.R."/>
            <person name="Le Roux H.F."/>
            <person name="Bove J.M."/>
        </authorList>
    </citation>
    <scope>NUCLEOTIDE SEQUENCE [GENOMIC DNA]</scope>
</reference>
<accession>Q9L5W5</accession>